<sequence>MDLLPYDVVEHILERLDVKSLLNCKSVSKQWRSTIRCRAFQERQLMHRRQSCNPDVLLVSVADEFYLLKRVHQVMRTLVLGSSVSVRILTPWEDTLYKVCQSSCDGLICLYNTYASNIVVNPTTRWHREFPLSTFQRLDRYEHQVGSVSWAKLGFGKDKINGTYKPVWLYNSAELGGLNDDDEDYDDEDKNNISMICQGNNNTSTFCEVFDFTTKAWRFVVPASPYRILPYQDPVYVDGSLHWLTEGETTNVLSFDLHAETFQVVSKAPFLHHHDYSSRELIMCNLDDRLCVSEKMWPNQVIWSLDSDHKTWKEIYSIDLNITSSLFGSNGFALRPLGVFDKDKLLFCEPEYGDQLLTHDPKTKSYEFDYRFFSPTTALPLCYFQSLISIL</sequence>
<proteinExistence type="evidence at transcript level"/>
<dbReference type="EMBL" id="AC004481">
    <property type="protein sequence ID" value="AAC27404.1"/>
    <property type="molecule type" value="Genomic_DNA"/>
</dbReference>
<dbReference type="EMBL" id="CP002685">
    <property type="protein sequence ID" value="AEC08948.1"/>
    <property type="molecule type" value="Genomic_DNA"/>
</dbReference>
<dbReference type="EMBL" id="AY649253">
    <property type="protein sequence ID" value="AAT69170.1"/>
    <property type="molecule type" value="Genomic_DNA"/>
</dbReference>
<dbReference type="EMBL" id="AY219101">
    <property type="protein sequence ID" value="AAO37188.1"/>
    <property type="molecule type" value="mRNA"/>
</dbReference>
<dbReference type="PIR" id="T02316">
    <property type="entry name" value="T02316"/>
</dbReference>
<dbReference type="RefSeq" id="NP_180975.1">
    <property type="nucleotide sequence ID" value="NM_128979.2"/>
</dbReference>
<dbReference type="SMR" id="O80777"/>
<dbReference type="FunCoup" id="O80777">
    <property type="interactions" value="3"/>
</dbReference>
<dbReference type="PaxDb" id="3702-AT2G34280.1"/>
<dbReference type="EnsemblPlants" id="AT2G34280.1">
    <property type="protein sequence ID" value="AT2G34280.1"/>
    <property type="gene ID" value="AT2G34280"/>
</dbReference>
<dbReference type="GeneID" id="817989"/>
<dbReference type="Gramene" id="AT2G34280.1">
    <property type="protein sequence ID" value="AT2G34280.1"/>
    <property type="gene ID" value="AT2G34280"/>
</dbReference>
<dbReference type="KEGG" id="ath:AT2G34280"/>
<dbReference type="Araport" id="AT2G34280"/>
<dbReference type="TAIR" id="AT2G34280"/>
<dbReference type="HOGENOM" id="CLU_027176_4_2_1"/>
<dbReference type="InParanoid" id="O80777"/>
<dbReference type="OMA" id="WRSTIRC"/>
<dbReference type="OrthoDB" id="1025453at2759"/>
<dbReference type="PhylomeDB" id="O80777"/>
<dbReference type="PRO" id="PR:O80777"/>
<dbReference type="Proteomes" id="UP000006548">
    <property type="component" value="Chromosome 2"/>
</dbReference>
<dbReference type="ExpressionAtlas" id="O80777">
    <property type="expression patterns" value="differential"/>
</dbReference>
<dbReference type="Gene3D" id="1.20.1280.50">
    <property type="match status" value="1"/>
</dbReference>
<dbReference type="InterPro" id="IPR006527">
    <property type="entry name" value="F-box-assoc_dom_typ1"/>
</dbReference>
<dbReference type="InterPro" id="IPR017451">
    <property type="entry name" value="F-box-assoc_interact_dom"/>
</dbReference>
<dbReference type="InterPro" id="IPR036047">
    <property type="entry name" value="F-box-like_dom_sf"/>
</dbReference>
<dbReference type="InterPro" id="IPR001810">
    <property type="entry name" value="F-box_dom"/>
</dbReference>
<dbReference type="InterPro" id="IPR011043">
    <property type="entry name" value="Gal_Oxase/kelch_b-propeller"/>
</dbReference>
<dbReference type="InterPro" id="IPR050796">
    <property type="entry name" value="SCF_F-box_component"/>
</dbReference>
<dbReference type="NCBIfam" id="TIGR01640">
    <property type="entry name" value="F_box_assoc_1"/>
    <property type="match status" value="1"/>
</dbReference>
<dbReference type="PANTHER" id="PTHR31672">
    <property type="entry name" value="BNACNNG10540D PROTEIN"/>
    <property type="match status" value="1"/>
</dbReference>
<dbReference type="PANTHER" id="PTHR31672:SF13">
    <property type="entry name" value="F-BOX PROTEIN CPR30-LIKE"/>
    <property type="match status" value="1"/>
</dbReference>
<dbReference type="Pfam" id="PF00646">
    <property type="entry name" value="F-box"/>
    <property type="match status" value="1"/>
</dbReference>
<dbReference type="Pfam" id="PF07734">
    <property type="entry name" value="FBA_1"/>
    <property type="match status" value="1"/>
</dbReference>
<dbReference type="SMART" id="SM00256">
    <property type="entry name" value="FBOX"/>
    <property type="match status" value="1"/>
</dbReference>
<dbReference type="SUPFAM" id="SSF81383">
    <property type="entry name" value="F-box domain"/>
    <property type="match status" value="1"/>
</dbReference>
<dbReference type="SUPFAM" id="SSF50965">
    <property type="entry name" value="Galactose oxidase, central domain"/>
    <property type="match status" value="1"/>
</dbReference>
<dbReference type="PROSITE" id="PS50181">
    <property type="entry name" value="FBOX"/>
    <property type="match status" value="1"/>
</dbReference>
<reference key="1">
    <citation type="journal article" date="1999" name="Nature">
        <title>Sequence and analysis of chromosome 2 of the plant Arabidopsis thaliana.</title>
        <authorList>
            <person name="Lin X."/>
            <person name="Kaul S."/>
            <person name="Rounsley S.D."/>
            <person name="Shea T.P."/>
            <person name="Benito M.-I."/>
            <person name="Town C.D."/>
            <person name="Fujii C.Y."/>
            <person name="Mason T.M."/>
            <person name="Bowman C.L."/>
            <person name="Barnstead M.E."/>
            <person name="Feldblyum T.V."/>
            <person name="Buell C.R."/>
            <person name="Ketchum K.A."/>
            <person name="Lee J.J."/>
            <person name="Ronning C.M."/>
            <person name="Koo H.L."/>
            <person name="Moffat K.S."/>
            <person name="Cronin L.A."/>
            <person name="Shen M."/>
            <person name="Pai G."/>
            <person name="Van Aken S."/>
            <person name="Umayam L."/>
            <person name="Tallon L.J."/>
            <person name="Gill J.E."/>
            <person name="Adams M.D."/>
            <person name="Carrera A.J."/>
            <person name="Creasy T.H."/>
            <person name="Goodman H.M."/>
            <person name="Somerville C.R."/>
            <person name="Copenhaver G.P."/>
            <person name="Preuss D."/>
            <person name="Nierman W.C."/>
            <person name="White O."/>
            <person name="Eisen J.A."/>
            <person name="Salzberg S.L."/>
            <person name="Fraser C.M."/>
            <person name="Venter J.C."/>
        </authorList>
    </citation>
    <scope>NUCLEOTIDE SEQUENCE [LARGE SCALE GENOMIC DNA]</scope>
    <source>
        <strain>cv. Columbia</strain>
    </source>
</reference>
<reference key="2">
    <citation type="journal article" date="2017" name="Plant J.">
        <title>Araport11: a complete reannotation of the Arabidopsis thaliana reference genome.</title>
        <authorList>
            <person name="Cheng C.Y."/>
            <person name="Krishnakumar V."/>
            <person name="Chan A.P."/>
            <person name="Thibaud-Nissen F."/>
            <person name="Schobel S."/>
            <person name="Town C.D."/>
        </authorList>
    </citation>
    <scope>GENOME REANNOTATION</scope>
    <source>
        <strain>cv. Columbia</strain>
    </source>
</reference>
<reference key="3">
    <citation type="submission" date="2004-06" db="EMBL/GenBank/DDBJ databases">
        <authorList>
            <person name="Underwood B.A."/>
            <person name="Xiao Y.-L."/>
            <person name="Moskal W.A. Jr."/>
            <person name="Monaghan E.L."/>
            <person name="Wang W."/>
            <person name="Redman J.C."/>
            <person name="Wu H.C."/>
            <person name="Utterback T."/>
            <person name="Town C.D."/>
        </authorList>
    </citation>
    <scope>NUCLEOTIDE SEQUENCE [LARGE SCALE GENOMIC DNA]</scope>
    <source>
        <strain>cv. Columbia</strain>
    </source>
</reference>
<reference key="4">
    <citation type="journal article" date="2005" name="Plant Physiol.">
        <title>Analysis of the cDNAs of hypothetical genes on Arabidopsis chromosome 2 reveals numerous transcript variants.</title>
        <authorList>
            <person name="Xiao Y.-L."/>
            <person name="Smith S.R."/>
            <person name="Ishmael N."/>
            <person name="Redman J.C."/>
            <person name="Kumar N."/>
            <person name="Monaghan E.L."/>
            <person name="Ayele M."/>
            <person name="Haas B.J."/>
            <person name="Wu H.C."/>
            <person name="Town C.D."/>
        </authorList>
    </citation>
    <scope>NUCLEOTIDE SEQUENCE [LARGE SCALE MRNA]</scope>
    <source>
        <strain>cv. Columbia</strain>
    </source>
</reference>
<gene>
    <name type="ordered locus">At2g34280</name>
    <name type="ORF">F13P17.12</name>
</gene>
<feature type="chain" id="PRO_0000283397" description="F-box protein At2g34280">
    <location>
        <begin position="1"/>
        <end position="391"/>
    </location>
</feature>
<feature type="domain" description="F-box" evidence="1">
    <location>
        <begin position="1"/>
        <end position="43"/>
    </location>
</feature>
<feature type="sequence conflict" description="In Ref. 4; AAO37188." evidence="2" ref="4">
    <original>I</original>
    <variation>V</variation>
    <location>
        <position position="315"/>
    </location>
</feature>
<feature type="sequence conflict" description="In Ref. 4; AAO37188." evidence="2" ref="4">
    <original>H</original>
    <variation>R</variation>
    <location>
        <position position="359"/>
    </location>
</feature>
<evidence type="ECO:0000255" key="1">
    <source>
        <dbReference type="PROSITE-ProRule" id="PRU00080"/>
    </source>
</evidence>
<evidence type="ECO:0000305" key="2"/>
<organism>
    <name type="scientific">Arabidopsis thaliana</name>
    <name type="common">Mouse-ear cress</name>
    <dbReference type="NCBI Taxonomy" id="3702"/>
    <lineage>
        <taxon>Eukaryota</taxon>
        <taxon>Viridiplantae</taxon>
        <taxon>Streptophyta</taxon>
        <taxon>Embryophyta</taxon>
        <taxon>Tracheophyta</taxon>
        <taxon>Spermatophyta</taxon>
        <taxon>Magnoliopsida</taxon>
        <taxon>eudicotyledons</taxon>
        <taxon>Gunneridae</taxon>
        <taxon>Pentapetalae</taxon>
        <taxon>rosids</taxon>
        <taxon>malvids</taxon>
        <taxon>Brassicales</taxon>
        <taxon>Brassicaceae</taxon>
        <taxon>Camelineae</taxon>
        <taxon>Arabidopsis</taxon>
    </lineage>
</organism>
<protein>
    <recommendedName>
        <fullName>F-box protein At2g34280</fullName>
    </recommendedName>
</protein>
<accession>O80777</accession>
<accession>Q84X08</accession>
<keyword id="KW-1185">Reference proteome</keyword>
<name>FB126_ARATH</name>